<gene>
    <name evidence="1" type="primary">psaB</name>
</gene>
<dbReference type="EC" id="1.97.1.12" evidence="1"/>
<dbReference type="EMBL" id="M90641">
    <property type="protein sequence ID" value="AAA84149.1"/>
    <property type="molecule type" value="Genomic_DNA"/>
</dbReference>
<dbReference type="PIR" id="S41481">
    <property type="entry name" value="S41481"/>
</dbReference>
<dbReference type="SMR" id="P36492"/>
<dbReference type="GO" id="GO:0009535">
    <property type="term" value="C:chloroplast thylakoid membrane"/>
    <property type="evidence" value="ECO:0007669"/>
    <property type="project" value="UniProtKB-SubCell"/>
</dbReference>
<dbReference type="GO" id="GO:0009522">
    <property type="term" value="C:photosystem I"/>
    <property type="evidence" value="ECO:0007669"/>
    <property type="project" value="UniProtKB-KW"/>
</dbReference>
<dbReference type="GO" id="GO:0051539">
    <property type="term" value="F:4 iron, 4 sulfur cluster binding"/>
    <property type="evidence" value="ECO:0007669"/>
    <property type="project" value="UniProtKB-KW"/>
</dbReference>
<dbReference type="GO" id="GO:0016168">
    <property type="term" value="F:chlorophyll binding"/>
    <property type="evidence" value="ECO:0007669"/>
    <property type="project" value="UniProtKB-KW"/>
</dbReference>
<dbReference type="GO" id="GO:0009055">
    <property type="term" value="F:electron transfer activity"/>
    <property type="evidence" value="ECO:0007669"/>
    <property type="project" value="UniProtKB-UniRule"/>
</dbReference>
<dbReference type="GO" id="GO:0000287">
    <property type="term" value="F:magnesium ion binding"/>
    <property type="evidence" value="ECO:0007669"/>
    <property type="project" value="UniProtKB-UniRule"/>
</dbReference>
<dbReference type="GO" id="GO:0016491">
    <property type="term" value="F:oxidoreductase activity"/>
    <property type="evidence" value="ECO:0007669"/>
    <property type="project" value="UniProtKB-KW"/>
</dbReference>
<dbReference type="GO" id="GO:0015979">
    <property type="term" value="P:photosynthesis"/>
    <property type="evidence" value="ECO:0007669"/>
    <property type="project" value="UniProtKB-UniRule"/>
</dbReference>
<dbReference type="FunFam" id="1.20.1130.10:FF:000001">
    <property type="entry name" value="Photosystem I P700 chlorophyll a apoprotein A2"/>
    <property type="match status" value="1"/>
</dbReference>
<dbReference type="Gene3D" id="1.20.1130.10">
    <property type="entry name" value="Photosystem I PsaA/PsaB"/>
    <property type="match status" value="1"/>
</dbReference>
<dbReference type="HAMAP" id="MF_00482">
    <property type="entry name" value="PSI_PsaB"/>
    <property type="match status" value="1"/>
</dbReference>
<dbReference type="InterPro" id="IPR001280">
    <property type="entry name" value="PSI_PsaA/B"/>
</dbReference>
<dbReference type="InterPro" id="IPR020586">
    <property type="entry name" value="PSI_PsaA/B_CS"/>
</dbReference>
<dbReference type="InterPro" id="IPR036408">
    <property type="entry name" value="PSI_PsaA/B_sf"/>
</dbReference>
<dbReference type="InterPro" id="IPR006244">
    <property type="entry name" value="PSI_PsaB"/>
</dbReference>
<dbReference type="NCBIfam" id="TIGR01336">
    <property type="entry name" value="psaB"/>
    <property type="match status" value="1"/>
</dbReference>
<dbReference type="PANTHER" id="PTHR30128">
    <property type="entry name" value="OUTER MEMBRANE PROTEIN, OMPA-RELATED"/>
    <property type="match status" value="1"/>
</dbReference>
<dbReference type="PANTHER" id="PTHR30128:SF19">
    <property type="entry name" value="PHOTOSYSTEM I P700 CHLOROPHYLL A APOPROTEIN A1-RELATED"/>
    <property type="match status" value="1"/>
</dbReference>
<dbReference type="Pfam" id="PF00223">
    <property type="entry name" value="PsaA_PsaB"/>
    <property type="match status" value="1"/>
</dbReference>
<dbReference type="PIRSF" id="PIRSF002905">
    <property type="entry name" value="PSI_A"/>
    <property type="match status" value="1"/>
</dbReference>
<dbReference type="PRINTS" id="PR00257">
    <property type="entry name" value="PHOTSYSPSAAB"/>
</dbReference>
<dbReference type="SUPFAM" id="SSF81558">
    <property type="entry name" value="Photosystem I subunits PsaA/PsaB"/>
    <property type="match status" value="1"/>
</dbReference>
<dbReference type="PROSITE" id="PS00419">
    <property type="entry name" value="PHOTOSYSTEM_I_PSAAB"/>
    <property type="match status" value="1"/>
</dbReference>
<protein>
    <recommendedName>
        <fullName evidence="1">Photosystem I P700 chlorophyll a apoprotein A2</fullName>
        <ecNumber evidence="1">1.97.1.12</ecNumber>
    </recommendedName>
    <alternativeName>
        <fullName evidence="1">PSI-B</fullName>
    </alternativeName>
    <alternativeName>
        <fullName evidence="1">PsaB</fullName>
    </alternativeName>
</protein>
<feature type="chain" id="PRO_0000088608" description="Photosystem I P700 chlorophyll a apoprotein A2">
    <location>
        <begin position="1"/>
        <end position="735"/>
    </location>
</feature>
<feature type="transmembrane region" description="Helical; Name=I" evidence="1">
    <location>
        <begin position="47"/>
        <end position="70"/>
    </location>
</feature>
<feature type="transmembrane region" description="Helical; Name=II" evidence="1">
    <location>
        <begin position="136"/>
        <end position="159"/>
    </location>
</feature>
<feature type="transmembrane region" description="Helical; Name=III" evidence="1">
    <location>
        <begin position="176"/>
        <end position="200"/>
    </location>
</feature>
<feature type="transmembrane region" description="Helical; Name=IV" evidence="1">
    <location>
        <begin position="274"/>
        <end position="292"/>
    </location>
</feature>
<feature type="transmembrane region" description="Helical; Name=V" evidence="1">
    <location>
        <begin position="331"/>
        <end position="354"/>
    </location>
</feature>
<feature type="transmembrane region" description="Helical; Name=VI" evidence="1">
    <location>
        <begin position="370"/>
        <end position="396"/>
    </location>
</feature>
<feature type="transmembrane region" description="Helical; Name=VII" evidence="1">
    <location>
        <begin position="418"/>
        <end position="440"/>
    </location>
</feature>
<feature type="transmembrane region" description="Helical; Name=VIII" evidence="1">
    <location>
        <begin position="518"/>
        <end position="536"/>
    </location>
</feature>
<feature type="transmembrane region" description="Helical; Name=IX" evidence="1">
    <location>
        <begin position="576"/>
        <end position="597"/>
    </location>
</feature>
<feature type="transmembrane region" description="Helical; Name=X" evidence="1">
    <location>
        <begin position="644"/>
        <end position="666"/>
    </location>
</feature>
<feature type="transmembrane region" description="Helical; Name=XI" evidence="1">
    <location>
        <begin position="708"/>
        <end position="728"/>
    </location>
</feature>
<feature type="binding site" evidence="1">
    <location>
        <position position="560"/>
    </location>
    <ligand>
        <name>[4Fe-4S] cluster</name>
        <dbReference type="ChEBI" id="CHEBI:49883"/>
        <note>ligand shared between dimeric partners</note>
    </ligand>
</feature>
<feature type="binding site" evidence="1">
    <location>
        <position position="569"/>
    </location>
    <ligand>
        <name>[4Fe-4S] cluster</name>
        <dbReference type="ChEBI" id="CHEBI:49883"/>
        <note>ligand shared between dimeric partners</note>
    </ligand>
</feature>
<feature type="binding site" description="axial binding residue" evidence="1">
    <location>
        <position position="655"/>
    </location>
    <ligand>
        <name>chlorophyll a</name>
        <dbReference type="ChEBI" id="CHEBI:58416"/>
        <label>B1</label>
    </ligand>
    <ligandPart>
        <name>Mg</name>
        <dbReference type="ChEBI" id="CHEBI:25107"/>
    </ligandPart>
</feature>
<feature type="binding site" description="axial binding residue" evidence="1">
    <location>
        <position position="663"/>
    </location>
    <ligand>
        <name>chlorophyll a</name>
        <dbReference type="ChEBI" id="CHEBI:58416"/>
        <label>B3</label>
    </ligand>
    <ligandPart>
        <name>Mg</name>
        <dbReference type="ChEBI" id="CHEBI:25107"/>
    </ligandPart>
</feature>
<feature type="binding site" evidence="1">
    <location>
        <position position="671"/>
    </location>
    <ligand>
        <name>chlorophyll a</name>
        <dbReference type="ChEBI" id="CHEBI:58416"/>
        <label>B3</label>
    </ligand>
</feature>
<feature type="binding site" evidence="1">
    <location>
        <position position="672"/>
    </location>
    <ligand>
        <name>phylloquinone</name>
        <dbReference type="ChEBI" id="CHEBI:18067"/>
        <label>B</label>
    </ligand>
</feature>
<evidence type="ECO:0000255" key="1">
    <source>
        <dbReference type="HAMAP-Rule" id="MF_00482"/>
    </source>
</evidence>
<keyword id="KW-0004">4Fe-4S</keyword>
<keyword id="KW-0148">Chlorophyll</keyword>
<keyword id="KW-0150">Chloroplast</keyword>
<keyword id="KW-0157">Chromophore</keyword>
<keyword id="KW-0249">Electron transport</keyword>
<keyword id="KW-0408">Iron</keyword>
<keyword id="KW-0411">Iron-sulfur</keyword>
<keyword id="KW-0460">Magnesium</keyword>
<keyword id="KW-0472">Membrane</keyword>
<keyword id="KW-0479">Metal-binding</keyword>
<keyword id="KW-0560">Oxidoreductase</keyword>
<keyword id="KW-0602">Photosynthesis</keyword>
<keyword id="KW-0603">Photosystem I</keyword>
<keyword id="KW-0934">Plastid</keyword>
<keyword id="KW-0793">Thylakoid</keyword>
<keyword id="KW-0812">Transmembrane</keyword>
<keyword id="KW-1133">Transmembrane helix</keyword>
<keyword id="KW-0813">Transport</keyword>
<geneLocation type="chloroplast"/>
<proteinExistence type="inferred from homology"/>
<reference key="1">
    <citation type="journal article" date="1993" name="Nucleic Acids Res.">
        <title>Group I introns interrupt the chloroplast psaB and psbC and the mitochondrial rrnL gene in Chlamydomonas.</title>
        <authorList>
            <person name="Turmel M."/>
            <person name="Mercier J.P."/>
            <person name="Cote M.J.J."/>
        </authorList>
    </citation>
    <scope>NUCLEOTIDE SEQUENCE [GENOMIC DNA]</scope>
    <source>
        <strain>UTEX 97</strain>
    </source>
</reference>
<sequence>MATKLFPKFSQGLAQDPTTRRIWFGLAVAHDFESHDGMTEENLYQKIFASHFGQLAIIFLWTSGNLFHVAWQGNFEQWVTDPVHVRPIAHAIWDPHFGTSAVEAFTRGGASGPVNIATSGVYQWWYTIGMRTNQDLFTGSVFLALVSAVFLFAGWLHLQPNFQPSLSWFKDAESRLNHHLSGLFGVSSLAWTGHLVHVAIPESRGRHVGWDNFLSVLPHPQGLAPFWSGNWAAYAQNPDTASHAFGTSEGSGQAILTFLGGFHPQTQSLWLSDMAHHHLAIAVIFIVAGHMYRTNFGIGHRLQAILDAHVPPSGNLGAGHKGLFDTVNNSLHFQLGLALASVGTITSMIAQHIYSLPPYAYLAIDFTTQAALYTHHQYIAGFIMCGAFAHGAIFFIRDYDPEANKGNVLARILDHKEAIISHLSWVTLFLGFHTLGLYVHNDVMQAFGTPEKQILIEPVFAQWIQAAQGKTVYGFDLLLSSSTSVASTAGQSVWLPGWLDAINNNQNTLFLTIGPGDFLVHHAIALGLHTTTLILVKGALDARGSKLMPDKKDFGYSFPCDGPGRGGTCDISAYDAFYLAVFWMLNTIGWVTFYFHWKHLALWQGNVAQFDESSTYLMGWLRDYLWLNSSQLINGYNPFGMNSLSVWAFCFLFGHLIYATGFMFLISWRGYWQELIETLVWAHEKTPLANIVYWKDKPVALSIVQARLVGLVHFSVGYIFTYAAFLIASTSGRFG</sequence>
<name>PSAB_CHLMO</name>
<organism>
    <name type="scientific">Chlamydomonas moewusii</name>
    <name type="common">Chlamydomonas eugametos</name>
    <dbReference type="NCBI Taxonomy" id="3054"/>
    <lineage>
        <taxon>Eukaryota</taxon>
        <taxon>Viridiplantae</taxon>
        <taxon>Chlorophyta</taxon>
        <taxon>core chlorophytes</taxon>
        <taxon>Chlorophyceae</taxon>
        <taxon>CS clade</taxon>
        <taxon>Chlamydomonadales</taxon>
        <taxon>Chlamydomonadaceae</taxon>
        <taxon>Chlamydomonas</taxon>
    </lineage>
</organism>
<comment type="function">
    <text evidence="1">PsaA and PsaB bind P700, the primary electron donor of photosystem I (PSI), as well as the electron acceptors A0, A1 and FX. PSI is a plastocyanin/cytochrome c6-ferredoxin oxidoreductase, converting photonic excitation into a charge separation, which transfers an electron from the donor P700 chlorophyll pair to the spectroscopically characterized acceptors A0, A1, FX, FA and FB in turn. Oxidized P700 is reduced on the lumenal side of the thylakoid membrane by plastocyanin or cytochrome c6.</text>
</comment>
<comment type="catalytic activity">
    <reaction evidence="1">
        <text>reduced [plastocyanin] + hnu + oxidized [2Fe-2S]-[ferredoxin] = oxidized [plastocyanin] + reduced [2Fe-2S]-[ferredoxin]</text>
        <dbReference type="Rhea" id="RHEA:30407"/>
        <dbReference type="Rhea" id="RHEA-COMP:10000"/>
        <dbReference type="Rhea" id="RHEA-COMP:10001"/>
        <dbReference type="Rhea" id="RHEA-COMP:10039"/>
        <dbReference type="Rhea" id="RHEA-COMP:10040"/>
        <dbReference type="ChEBI" id="CHEBI:29036"/>
        <dbReference type="ChEBI" id="CHEBI:30212"/>
        <dbReference type="ChEBI" id="CHEBI:33737"/>
        <dbReference type="ChEBI" id="CHEBI:33738"/>
        <dbReference type="ChEBI" id="CHEBI:49552"/>
        <dbReference type="EC" id="1.97.1.12"/>
    </reaction>
</comment>
<comment type="cofactor">
    <text evidence="1">P700 is a chlorophyll a/chlorophyll a' dimer, A0 is one or more chlorophyll a, A1 is one or both phylloquinones and FX is a shared 4Fe-4S iron-sulfur center.</text>
</comment>
<comment type="subunit">
    <text evidence="1">The PsaA/B heterodimer binds the P700 chlorophyll special pair and subsequent electron acceptors. PSI consists of a core antenna complex that captures photons, and an electron transfer chain that converts photonic excitation into a charge separation. The eukaryotic PSI reaction center is composed of at least 11 subunits.</text>
</comment>
<comment type="subcellular location">
    <subcellularLocation>
        <location evidence="1">Plastid</location>
        <location evidence="1">Chloroplast thylakoid membrane</location>
        <topology evidence="1">Multi-pass membrane protein</topology>
    </subcellularLocation>
</comment>
<comment type="similarity">
    <text evidence="1">Belongs to the PsaA/PsaB family.</text>
</comment>
<accession>P36492</accession>